<gene>
    <name evidence="1" type="primary">lpxK</name>
    <name type="ordered locus">FTF0110</name>
</gene>
<dbReference type="EC" id="2.7.1.130" evidence="1"/>
<dbReference type="EMBL" id="AM286280">
    <property type="protein sequence ID" value="CAL08126.1"/>
    <property type="molecule type" value="Genomic_DNA"/>
</dbReference>
<dbReference type="RefSeq" id="WP_003019528.1">
    <property type="nucleotide sequence ID" value="NC_008245.1"/>
</dbReference>
<dbReference type="SMR" id="Q14JW5"/>
<dbReference type="KEGG" id="ftf:FTF0110"/>
<dbReference type="HOGENOM" id="CLU_038816_2_0_6"/>
<dbReference type="UniPathway" id="UPA00359">
    <property type="reaction ID" value="UER00482"/>
</dbReference>
<dbReference type="GO" id="GO:0005886">
    <property type="term" value="C:plasma membrane"/>
    <property type="evidence" value="ECO:0007669"/>
    <property type="project" value="TreeGrafter"/>
</dbReference>
<dbReference type="GO" id="GO:0005524">
    <property type="term" value="F:ATP binding"/>
    <property type="evidence" value="ECO:0007669"/>
    <property type="project" value="UniProtKB-UniRule"/>
</dbReference>
<dbReference type="GO" id="GO:0009029">
    <property type="term" value="F:tetraacyldisaccharide 4'-kinase activity"/>
    <property type="evidence" value="ECO:0007669"/>
    <property type="project" value="UniProtKB-UniRule"/>
</dbReference>
<dbReference type="GO" id="GO:0009245">
    <property type="term" value="P:lipid A biosynthetic process"/>
    <property type="evidence" value="ECO:0007669"/>
    <property type="project" value="UniProtKB-UniRule"/>
</dbReference>
<dbReference type="GO" id="GO:0009244">
    <property type="term" value="P:lipopolysaccharide core region biosynthetic process"/>
    <property type="evidence" value="ECO:0007669"/>
    <property type="project" value="TreeGrafter"/>
</dbReference>
<dbReference type="HAMAP" id="MF_00409">
    <property type="entry name" value="LpxK"/>
    <property type="match status" value="1"/>
</dbReference>
<dbReference type="InterPro" id="IPR003758">
    <property type="entry name" value="LpxK"/>
</dbReference>
<dbReference type="InterPro" id="IPR027417">
    <property type="entry name" value="P-loop_NTPase"/>
</dbReference>
<dbReference type="NCBIfam" id="TIGR00682">
    <property type="entry name" value="lpxK"/>
    <property type="match status" value="1"/>
</dbReference>
<dbReference type="PANTHER" id="PTHR42724">
    <property type="entry name" value="TETRAACYLDISACCHARIDE 4'-KINASE"/>
    <property type="match status" value="1"/>
</dbReference>
<dbReference type="PANTHER" id="PTHR42724:SF1">
    <property type="entry name" value="TETRAACYLDISACCHARIDE 4'-KINASE, MITOCHONDRIAL-RELATED"/>
    <property type="match status" value="1"/>
</dbReference>
<dbReference type="Pfam" id="PF02606">
    <property type="entry name" value="LpxK"/>
    <property type="match status" value="1"/>
</dbReference>
<dbReference type="SUPFAM" id="SSF52540">
    <property type="entry name" value="P-loop containing nucleoside triphosphate hydrolases"/>
    <property type="match status" value="1"/>
</dbReference>
<sequence length="322" mass="36193">MLDKIWYRSKPNLLSRVLQPISLVFIDIANKRKIKQQLKQYKSKIPIIVVGNISVGGTGKTPVVRMLAQQYLAQDKKPAIISRGYGAKADNYPFEVTSGTLATQCGDEPAMLFDALQAQVPIVIAPERVQAVKYIEKNFPDTDIIMSDDGLQHYKLARDKEIVVVDAIRMFGNKLCLPAGPLREPIERLKEVDQIIVIGNCSDKDKELLKNYKNVTYAKVVATEFVNILTAKKVAKTEFNHQNAIAIAGIGNPTKFFKTLEESAINITAKKVFKDHHKFTQSDFEGIDSDITVVMTYKDAIKCKNFAKANWWYLDIALDINV</sequence>
<keyword id="KW-0067">ATP-binding</keyword>
<keyword id="KW-0418">Kinase</keyword>
<keyword id="KW-0441">Lipid A biosynthesis</keyword>
<keyword id="KW-0444">Lipid biosynthesis</keyword>
<keyword id="KW-0443">Lipid metabolism</keyword>
<keyword id="KW-0547">Nucleotide-binding</keyword>
<keyword id="KW-0808">Transferase</keyword>
<reference key="1">
    <citation type="journal article" date="2007" name="PLoS ONE">
        <title>Genome sequencing shows that European isolates of Francisella tularensis subspecies tularensis are almost identical to US laboratory strain Schu S4.</title>
        <authorList>
            <person name="Chaudhuri R.R."/>
            <person name="Ren C.-P."/>
            <person name="Desmond L."/>
            <person name="Vincent G.A."/>
            <person name="Silman N.J."/>
            <person name="Brehm J.K."/>
            <person name="Elmore M.J."/>
            <person name="Hudson M.J."/>
            <person name="Forsman M."/>
            <person name="Isherwood K.E."/>
            <person name="Gurycova D."/>
            <person name="Minton N.P."/>
            <person name="Titball R.W."/>
            <person name="Pallen M.J."/>
            <person name="Vipond R."/>
        </authorList>
    </citation>
    <scope>NUCLEOTIDE SEQUENCE [LARGE SCALE GENOMIC DNA]</scope>
    <source>
        <strain>FSC 198</strain>
    </source>
</reference>
<organism>
    <name type="scientific">Francisella tularensis subsp. tularensis (strain FSC 198)</name>
    <dbReference type="NCBI Taxonomy" id="393115"/>
    <lineage>
        <taxon>Bacteria</taxon>
        <taxon>Pseudomonadati</taxon>
        <taxon>Pseudomonadota</taxon>
        <taxon>Gammaproteobacteria</taxon>
        <taxon>Thiotrichales</taxon>
        <taxon>Francisellaceae</taxon>
        <taxon>Francisella</taxon>
    </lineage>
</organism>
<accession>Q14JW5</accession>
<proteinExistence type="inferred from homology"/>
<protein>
    <recommendedName>
        <fullName evidence="1">Tetraacyldisaccharide 4'-kinase</fullName>
        <ecNumber evidence="1">2.7.1.130</ecNumber>
    </recommendedName>
    <alternativeName>
        <fullName evidence="1">Lipid A 4'-kinase</fullName>
    </alternativeName>
</protein>
<feature type="chain" id="PRO_1000049893" description="Tetraacyldisaccharide 4'-kinase">
    <location>
        <begin position="1"/>
        <end position="322"/>
    </location>
</feature>
<feature type="binding site" evidence="1">
    <location>
        <begin position="54"/>
        <end position="61"/>
    </location>
    <ligand>
        <name>ATP</name>
        <dbReference type="ChEBI" id="CHEBI:30616"/>
    </ligand>
</feature>
<comment type="function">
    <text evidence="1">Transfers the gamma-phosphate of ATP to the 4'-position of a tetraacyldisaccharide 1-phosphate intermediate (termed DS-1-P) to form tetraacyldisaccharide 1,4'-bis-phosphate (lipid IVA).</text>
</comment>
<comment type="catalytic activity">
    <reaction evidence="1">
        <text>a lipid A disaccharide + ATP = a lipid IVA + ADP + H(+)</text>
        <dbReference type="Rhea" id="RHEA:67840"/>
        <dbReference type="ChEBI" id="CHEBI:15378"/>
        <dbReference type="ChEBI" id="CHEBI:30616"/>
        <dbReference type="ChEBI" id="CHEBI:176343"/>
        <dbReference type="ChEBI" id="CHEBI:176425"/>
        <dbReference type="ChEBI" id="CHEBI:456216"/>
        <dbReference type="EC" id="2.7.1.130"/>
    </reaction>
</comment>
<comment type="pathway">
    <text evidence="1">Glycolipid biosynthesis; lipid IV(A) biosynthesis; lipid IV(A) from (3R)-3-hydroxytetradecanoyl-[acyl-carrier-protein] and UDP-N-acetyl-alpha-D-glucosamine: step 6/6.</text>
</comment>
<comment type="similarity">
    <text evidence="1">Belongs to the LpxK family.</text>
</comment>
<name>LPXK_FRAT1</name>
<evidence type="ECO:0000255" key="1">
    <source>
        <dbReference type="HAMAP-Rule" id="MF_00409"/>
    </source>
</evidence>